<proteinExistence type="inferred from homology"/>
<reference key="1">
    <citation type="journal article" date="1994" name="J. Mol. Evol.">
        <title>Evolution of the primate cytochrome c oxidase subunit II gene.</title>
        <authorList>
            <person name="Adkins R.M."/>
            <person name="Honeycutt R.L."/>
        </authorList>
    </citation>
    <scope>NUCLEOTIDE SEQUENCE [GENOMIC DNA]</scope>
</reference>
<gene>
    <name type="primary">MT-CO2</name>
    <name type="synonym">COII</name>
    <name type="synonym">COXII</name>
    <name type="synonym">MTCO2</name>
</gene>
<keyword id="KW-0186">Copper</keyword>
<keyword id="KW-0249">Electron transport</keyword>
<keyword id="KW-0460">Magnesium</keyword>
<keyword id="KW-0472">Membrane</keyword>
<keyword id="KW-0479">Metal-binding</keyword>
<keyword id="KW-0496">Mitochondrion</keyword>
<keyword id="KW-0999">Mitochondrion inner membrane</keyword>
<keyword id="KW-0597">Phosphoprotein</keyword>
<keyword id="KW-0679">Respiratory chain</keyword>
<keyword id="KW-1278">Translocase</keyword>
<keyword id="KW-0812">Transmembrane</keyword>
<keyword id="KW-1133">Transmembrane helix</keyword>
<keyword id="KW-0813">Transport</keyword>
<protein>
    <recommendedName>
        <fullName>Cytochrome c oxidase subunit 2</fullName>
        <ecNumber>7.1.1.9</ecNumber>
    </recommendedName>
    <alternativeName>
        <fullName>Cytochrome c oxidase polypeptide II</fullName>
    </alternativeName>
</protein>
<comment type="function">
    <text evidence="3">Component of the cytochrome c oxidase, the last enzyme in the mitochondrial electron transport chain which drives oxidative phosphorylation. The respiratory chain contains 3 multisubunit complexes succinate dehydrogenase (complex II, CII), ubiquinol-cytochrome c oxidoreductase (cytochrome b-c1 complex, complex III, CIII) and cytochrome c oxidase (complex IV, CIV), that cooperate to transfer electrons derived from NADH and succinate to molecular oxygen, creating an electrochemical gradient over the inner membrane that drives transmembrane transport and the ATP synthase. Cytochrome c oxidase is the component of the respiratory chain that catalyzes the reduction of oxygen to water. Electrons originating from reduced cytochrome c in the intermembrane space (IMS) are transferred via the dinuclear copper A center (CU(A)) of subunit 2 and heme A of subunit 1 to the active site in subunit 1, a binuclear center (BNC) formed by heme A3 and copper B (CU(B)). The BNC reduces molecular oxygen to 2 water molecules using 4 electrons from cytochrome c in the IMS and 4 protons from the mitochondrial matrix.</text>
</comment>
<comment type="catalytic activity">
    <reaction evidence="3">
        <text>4 Fe(II)-[cytochrome c] + O2 + 8 H(+)(in) = 4 Fe(III)-[cytochrome c] + 2 H2O + 4 H(+)(out)</text>
        <dbReference type="Rhea" id="RHEA:11436"/>
        <dbReference type="Rhea" id="RHEA-COMP:10350"/>
        <dbReference type="Rhea" id="RHEA-COMP:14399"/>
        <dbReference type="ChEBI" id="CHEBI:15377"/>
        <dbReference type="ChEBI" id="CHEBI:15378"/>
        <dbReference type="ChEBI" id="CHEBI:15379"/>
        <dbReference type="ChEBI" id="CHEBI:29033"/>
        <dbReference type="ChEBI" id="CHEBI:29034"/>
        <dbReference type="EC" id="7.1.1.9"/>
    </reaction>
    <physiologicalReaction direction="left-to-right" evidence="3">
        <dbReference type="Rhea" id="RHEA:11437"/>
    </physiologicalReaction>
</comment>
<comment type="cofactor">
    <cofactor evidence="4">
        <name>Cu cation</name>
        <dbReference type="ChEBI" id="CHEBI:23378"/>
    </cofactor>
    <text evidence="4">Binds a dinuclear copper A center per subunit.</text>
</comment>
<comment type="subunit">
    <text evidence="1 4">Component of the cytochrome c oxidase (complex IV, CIV), a multisubunit enzyme composed of 14 subunits. The complex is composed of a catalytic core of 3 subunits MT-CO1, MT-CO2 and MT-CO3, encoded in the mitochondrial DNA, and 11 supernumerary subunits COX4I, COX5A, COX5B, COX6A, COX6B, COX6C, COX7A, COX7B, COX7C, COX8 and NDUFA4, which are encoded in the nuclear genome. The complex exists as a monomer or a dimer and forms supercomplexes (SCs) in the inner mitochondrial membrane with NADH-ubiquinone oxidoreductase (complex I, CI) and ubiquinol-cytochrome c oxidoreductase (cytochrome b-c1 complex, complex III, CIII), resulting in different assemblies (supercomplex SCI(1)III(2)IV(1) and megacomplex MCI(2)III(2)IV(2)) (By similarity). Found in a complex with TMEM177, COA6, COX18, COX20, SCO1 and SCO2. Interacts with TMEM177 in a COX20-dependent manner. Interacts with COX20. Interacts with COX16 (By similarity).</text>
</comment>
<comment type="subcellular location">
    <subcellularLocation>
        <location evidence="4">Mitochondrion inner membrane</location>
        <topology evidence="4">Multi-pass membrane protein</topology>
    </subcellularLocation>
</comment>
<comment type="similarity">
    <text evidence="5">Belongs to the cytochrome c oxidase subunit 2 family.</text>
</comment>
<organism>
    <name type="scientific">Daubentonia madagascariensis</name>
    <name type="common">Aye-aye</name>
    <name type="synonym">Sciurus madagascariensis</name>
    <dbReference type="NCBI Taxonomy" id="31869"/>
    <lineage>
        <taxon>Eukaryota</taxon>
        <taxon>Metazoa</taxon>
        <taxon>Chordata</taxon>
        <taxon>Craniata</taxon>
        <taxon>Vertebrata</taxon>
        <taxon>Euteleostomi</taxon>
        <taxon>Mammalia</taxon>
        <taxon>Eutheria</taxon>
        <taxon>Euarchontoglires</taxon>
        <taxon>Primates</taxon>
        <taxon>Strepsirrhini</taxon>
        <taxon>Chiromyiformes</taxon>
        <taxon>Daubentoniidae</taxon>
        <taxon>Daubentonia</taxon>
    </lineage>
</organism>
<dbReference type="EC" id="7.1.1.9"/>
<dbReference type="EMBL" id="L22776">
    <property type="protein sequence ID" value="AAA67897.1"/>
    <property type="molecule type" value="Genomic_DNA"/>
</dbReference>
<dbReference type="PIR" id="I37019">
    <property type="entry name" value="I37019"/>
</dbReference>
<dbReference type="SMR" id="P98032"/>
<dbReference type="GO" id="GO:0005743">
    <property type="term" value="C:mitochondrial inner membrane"/>
    <property type="evidence" value="ECO:0007669"/>
    <property type="project" value="UniProtKB-SubCell"/>
</dbReference>
<dbReference type="GO" id="GO:0045277">
    <property type="term" value="C:respiratory chain complex IV"/>
    <property type="evidence" value="ECO:0000250"/>
    <property type="project" value="UniProtKB"/>
</dbReference>
<dbReference type="GO" id="GO:0005507">
    <property type="term" value="F:copper ion binding"/>
    <property type="evidence" value="ECO:0007669"/>
    <property type="project" value="InterPro"/>
</dbReference>
<dbReference type="GO" id="GO:0004129">
    <property type="term" value="F:cytochrome-c oxidase activity"/>
    <property type="evidence" value="ECO:0007669"/>
    <property type="project" value="UniProtKB-EC"/>
</dbReference>
<dbReference type="GO" id="GO:0042773">
    <property type="term" value="P:ATP synthesis coupled electron transport"/>
    <property type="evidence" value="ECO:0007669"/>
    <property type="project" value="TreeGrafter"/>
</dbReference>
<dbReference type="CDD" id="cd13912">
    <property type="entry name" value="CcO_II_C"/>
    <property type="match status" value="1"/>
</dbReference>
<dbReference type="FunFam" id="1.10.287.90:FF:000001">
    <property type="entry name" value="Cytochrome c oxidase subunit 2"/>
    <property type="match status" value="1"/>
</dbReference>
<dbReference type="FunFam" id="2.60.40.420:FF:000001">
    <property type="entry name" value="Cytochrome c oxidase subunit 2"/>
    <property type="match status" value="1"/>
</dbReference>
<dbReference type="Gene3D" id="1.10.287.90">
    <property type="match status" value="1"/>
</dbReference>
<dbReference type="Gene3D" id="2.60.40.420">
    <property type="entry name" value="Cupredoxins - blue copper proteins"/>
    <property type="match status" value="1"/>
</dbReference>
<dbReference type="InterPro" id="IPR045187">
    <property type="entry name" value="CcO_II"/>
</dbReference>
<dbReference type="InterPro" id="IPR002429">
    <property type="entry name" value="CcO_II-like_C"/>
</dbReference>
<dbReference type="InterPro" id="IPR034210">
    <property type="entry name" value="CcO_II_C"/>
</dbReference>
<dbReference type="InterPro" id="IPR001505">
    <property type="entry name" value="Copper_CuA"/>
</dbReference>
<dbReference type="InterPro" id="IPR008972">
    <property type="entry name" value="Cupredoxin"/>
</dbReference>
<dbReference type="InterPro" id="IPR014222">
    <property type="entry name" value="Cyt_c_oxidase_su2"/>
</dbReference>
<dbReference type="InterPro" id="IPR011759">
    <property type="entry name" value="Cyt_c_oxidase_su2_TM_dom"/>
</dbReference>
<dbReference type="InterPro" id="IPR036257">
    <property type="entry name" value="Cyt_c_oxidase_su2_TM_sf"/>
</dbReference>
<dbReference type="NCBIfam" id="TIGR02866">
    <property type="entry name" value="CoxB"/>
    <property type="match status" value="1"/>
</dbReference>
<dbReference type="PANTHER" id="PTHR22888:SF9">
    <property type="entry name" value="CYTOCHROME C OXIDASE SUBUNIT 2"/>
    <property type="match status" value="1"/>
</dbReference>
<dbReference type="PANTHER" id="PTHR22888">
    <property type="entry name" value="CYTOCHROME C OXIDASE, SUBUNIT II"/>
    <property type="match status" value="1"/>
</dbReference>
<dbReference type="Pfam" id="PF00116">
    <property type="entry name" value="COX2"/>
    <property type="match status" value="1"/>
</dbReference>
<dbReference type="Pfam" id="PF02790">
    <property type="entry name" value="COX2_TM"/>
    <property type="match status" value="1"/>
</dbReference>
<dbReference type="PRINTS" id="PR01166">
    <property type="entry name" value="CYCOXIDASEII"/>
</dbReference>
<dbReference type="SUPFAM" id="SSF49503">
    <property type="entry name" value="Cupredoxins"/>
    <property type="match status" value="1"/>
</dbReference>
<dbReference type="SUPFAM" id="SSF81464">
    <property type="entry name" value="Cytochrome c oxidase subunit II-like, transmembrane region"/>
    <property type="match status" value="1"/>
</dbReference>
<dbReference type="PROSITE" id="PS00078">
    <property type="entry name" value="COX2"/>
    <property type="match status" value="1"/>
</dbReference>
<dbReference type="PROSITE" id="PS50857">
    <property type="entry name" value="COX2_CUA"/>
    <property type="match status" value="1"/>
</dbReference>
<dbReference type="PROSITE" id="PS50999">
    <property type="entry name" value="COX2_TM"/>
    <property type="match status" value="1"/>
</dbReference>
<evidence type="ECO:0000250" key="1">
    <source>
        <dbReference type="UniProtKB" id="P00403"/>
    </source>
</evidence>
<evidence type="ECO:0000250" key="2">
    <source>
        <dbReference type="UniProtKB" id="P00406"/>
    </source>
</evidence>
<evidence type="ECO:0000250" key="3">
    <source>
        <dbReference type="UniProtKB" id="P00410"/>
    </source>
</evidence>
<evidence type="ECO:0000250" key="4">
    <source>
        <dbReference type="UniProtKB" id="P68530"/>
    </source>
</evidence>
<evidence type="ECO:0000305" key="5"/>
<geneLocation type="mitochondrion"/>
<accession>P98032</accession>
<feature type="chain" id="PRO_0000183568" description="Cytochrome c oxidase subunit 2">
    <location>
        <begin position="1"/>
        <end position="227"/>
    </location>
</feature>
<feature type="topological domain" description="Mitochondrial intermembrane" evidence="4">
    <location>
        <begin position="1"/>
        <end position="14"/>
    </location>
</feature>
<feature type="transmembrane region" description="Helical; Name=I" evidence="4">
    <location>
        <begin position="15"/>
        <end position="45"/>
    </location>
</feature>
<feature type="topological domain" description="Mitochondrial matrix" evidence="4">
    <location>
        <begin position="46"/>
        <end position="59"/>
    </location>
</feature>
<feature type="transmembrane region" description="Helical; Name=II" evidence="4">
    <location>
        <begin position="60"/>
        <end position="87"/>
    </location>
</feature>
<feature type="topological domain" description="Mitochondrial intermembrane" evidence="4">
    <location>
        <begin position="88"/>
        <end position="227"/>
    </location>
</feature>
<feature type="binding site" evidence="4">
    <location>
        <position position="161"/>
    </location>
    <ligand>
        <name>Cu cation</name>
        <dbReference type="ChEBI" id="CHEBI:23378"/>
        <label>A1</label>
    </ligand>
</feature>
<feature type="binding site" evidence="4">
    <location>
        <position position="196"/>
    </location>
    <ligand>
        <name>Cu cation</name>
        <dbReference type="ChEBI" id="CHEBI:23378"/>
        <label>A1</label>
    </ligand>
</feature>
<feature type="binding site" evidence="4">
    <location>
        <position position="196"/>
    </location>
    <ligand>
        <name>Cu cation</name>
        <dbReference type="ChEBI" id="CHEBI:23378"/>
        <label>A2</label>
    </ligand>
</feature>
<feature type="binding site" evidence="4">
    <location>
        <position position="198"/>
    </location>
    <ligand>
        <name>Cu cation</name>
        <dbReference type="ChEBI" id="CHEBI:23378"/>
        <label>A2</label>
    </ligand>
</feature>
<feature type="binding site" evidence="4">
    <location>
        <position position="198"/>
    </location>
    <ligand>
        <name>Mg(2+)</name>
        <dbReference type="ChEBI" id="CHEBI:18420"/>
        <note>ligand shared with MT-CO1</note>
    </ligand>
</feature>
<feature type="binding site" evidence="4">
    <location>
        <position position="200"/>
    </location>
    <ligand>
        <name>Cu cation</name>
        <dbReference type="ChEBI" id="CHEBI:23378"/>
        <label>A1</label>
    </ligand>
</feature>
<feature type="binding site" evidence="4">
    <location>
        <position position="200"/>
    </location>
    <ligand>
        <name>Cu cation</name>
        <dbReference type="ChEBI" id="CHEBI:23378"/>
        <label>A2</label>
    </ligand>
</feature>
<feature type="binding site" evidence="4">
    <location>
        <position position="204"/>
    </location>
    <ligand>
        <name>Cu cation</name>
        <dbReference type="ChEBI" id="CHEBI:23378"/>
        <label>A2</label>
    </ligand>
</feature>
<feature type="binding site" evidence="4">
    <location>
        <position position="207"/>
    </location>
    <ligand>
        <name>Cu cation</name>
        <dbReference type="ChEBI" id="CHEBI:23378"/>
        <label>A1</label>
    </ligand>
</feature>
<feature type="modified residue" description="Phosphotyrosine" evidence="2">
    <location>
        <position position="218"/>
    </location>
</feature>
<sequence length="227" mass="26037">MAYPAQMGFQDATSPIMEELLYFHDHTLMIVFMISSLVLYTISLMLTTSLTHTNTMNAQEVETVWTILPAIICILIALPSLRILYMMDEINNPSLTIKTMGHQWYWTYEYTDYENMTFDSYMTSTNDLTPGELRLLEVDNRMVLPTELPIRVLVSSEDVLHSWTVPSLGLKTDAIPGRLNQTTLMASRPGLYYGQCSEICGANHSFMPIVLELIPLKYFEKWLLTML</sequence>
<name>COX2_DAUMA</name>